<evidence type="ECO:0000255" key="1">
    <source>
        <dbReference type="HAMAP-Rule" id="MF_01377"/>
    </source>
</evidence>
<organism>
    <name type="scientific">Yersinia enterocolitica serotype O:8 / biotype 1B (strain NCTC 13174 / 8081)</name>
    <dbReference type="NCBI Taxonomy" id="393305"/>
    <lineage>
        <taxon>Bacteria</taxon>
        <taxon>Pseudomonadati</taxon>
        <taxon>Pseudomonadota</taxon>
        <taxon>Gammaproteobacteria</taxon>
        <taxon>Enterobacterales</taxon>
        <taxon>Yersiniaceae</taxon>
        <taxon>Yersinia</taxon>
    </lineage>
</organism>
<sequence>MPHTLLILNGKEAGNQDVRNAVKNLRDEGVTLHVRVTWEQGDAKRYVNEAAALAVETIIAGGGDGTINEVASALIALPESNRPSLGILPLGTANDFATSCSIPLQIDHALQLAVKGRAVAIDLAQVNDKHYFINMATGGFGTRITTETPEKLKAVLGGASYFIHGLMRMDTIKADSCEIRGPGFEWSGDALVIGIGNGRQAGGGQPLCPDALINDGLLQLRLLIAEELLPALLTSVFSGEKNKNVIETTLPWLEITAPHDITFNLDGEPLSGKNFRIEVIPNAIQCRLPPNCELLG</sequence>
<gene>
    <name type="ordered locus">YE1099</name>
</gene>
<name>YEGS_YERE8</name>
<proteinExistence type="inferred from homology"/>
<protein>
    <recommendedName>
        <fullName evidence="1">Probable lipid kinase YegS-like</fullName>
        <ecNumber evidence="1">2.7.1.-</ecNumber>
    </recommendedName>
</protein>
<feature type="chain" id="PRO_0000292170" description="Probable lipid kinase YegS-like">
    <location>
        <begin position="1"/>
        <end position="296"/>
    </location>
</feature>
<feature type="domain" description="DAGKc" evidence="1">
    <location>
        <begin position="1"/>
        <end position="130"/>
    </location>
</feature>
<feature type="active site" description="Proton acceptor" evidence="1">
    <location>
        <position position="268"/>
    </location>
</feature>
<feature type="binding site" evidence="1">
    <location>
        <position position="37"/>
    </location>
    <ligand>
        <name>ATP</name>
        <dbReference type="ChEBI" id="CHEBI:30616"/>
    </ligand>
</feature>
<feature type="binding site" evidence="1">
    <location>
        <begin position="63"/>
        <end position="69"/>
    </location>
    <ligand>
        <name>ATP</name>
        <dbReference type="ChEBI" id="CHEBI:30616"/>
    </ligand>
</feature>
<feature type="binding site" evidence="1">
    <location>
        <position position="92"/>
    </location>
    <ligand>
        <name>ATP</name>
        <dbReference type="ChEBI" id="CHEBI:30616"/>
    </ligand>
</feature>
<feature type="binding site" evidence="1">
    <location>
        <position position="212"/>
    </location>
    <ligand>
        <name>Mg(2+)</name>
        <dbReference type="ChEBI" id="CHEBI:18420"/>
    </ligand>
</feature>
<feature type="binding site" evidence="1">
    <location>
        <position position="215"/>
    </location>
    <ligand>
        <name>Mg(2+)</name>
        <dbReference type="ChEBI" id="CHEBI:18420"/>
    </ligand>
</feature>
<feature type="binding site" evidence="1">
    <location>
        <position position="217"/>
    </location>
    <ligand>
        <name>Mg(2+)</name>
        <dbReference type="ChEBI" id="CHEBI:18420"/>
    </ligand>
</feature>
<dbReference type="EC" id="2.7.1.-" evidence="1"/>
<dbReference type="EMBL" id="AM286415">
    <property type="protein sequence ID" value="CAL11195.1"/>
    <property type="molecule type" value="Genomic_DNA"/>
</dbReference>
<dbReference type="RefSeq" id="YP_001005430.1">
    <property type="nucleotide sequence ID" value="NC_008800.1"/>
</dbReference>
<dbReference type="SMR" id="A1JKV8"/>
<dbReference type="KEGG" id="yen:YE1099"/>
<dbReference type="PATRIC" id="fig|393305.7.peg.1196"/>
<dbReference type="eggNOG" id="COG1597">
    <property type="taxonomic scope" value="Bacteria"/>
</dbReference>
<dbReference type="HOGENOM" id="CLU_045532_1_1_6"/>
<dbReference type="OrthoDB" id="142078at2"/>
<dbReference type="Proteomes" id="UP000000642">
    <property type="component" value="Chromosome"/>
</dbReference>
<dbReference type="GO" id="GO:0005737">
    <property type="term" value="C:cytoplasm"/>
    <property type="evidence" value="ECO:0007669"/>
    <property type="project" value="UniProtKB-SubCell"/>
</dbReference>
<dbReference type="GO" id="GO:0005886">
    <property type="term" value="C:plasma membrane"/>
    <property type="evidence" value="ECO:0007669"/>
    <property type="project" value="TreeGrafter"/>
</dbReference>
<dbReference type="GO" id="GO:0005524">
    <property type="term" value="F:ATP binding"/>
    <property type="evidence" value="ECO:0007669"/>
    <property type="project" value="UniProtKB-UniRule"/>
</dbReference>
<dbReference type="GO" id="GO:0001727">
    <property type="term" value="F:lipid kinase activity"/>
    <property type="evidence" value="ECO:0007669"/>
    <property type="project" value="UniProtKB-UniRule"/>
</dbReference>
<dbReference type="GO" id="GO:0000287">
    <property type="term" value="F:magnesium ion binding"/>
    <property type="evidence" value="ECO:0007669"/>
    <property type="project" value="UniProtKB-UniRule"/>
</dbReference>
<dbReference type="GO" id="GO:0008654">
    <property type="term" value="P:phospholipid biosynthetic process"/>
    <property type="evidence" value="ECO:0007669"/>
    <property type="project" value="UniProtKB-UniRule"/>
</dbReference>
<dbReference type="Gene3D" id="2.60.200.40">
    <property type="match status" value="1"/>
</dbReference>
<dbReference type="Gene3D" id="3.40.50.10330">
    <property type="entry name" value="Probable inorganic polyphosphate/atp-NAD kinase, domain 1"/>
    <property type="match status" value="1"/>
</dbReference>
<dbReference type="HAMAP" id="MF_01377">
    <property type="entry name" value="YegS"/>
    <property type="match status" value="1"/>
</dbReference>
<dbReference type="InterPro" id="IPR017438">
    <property type="entry name" value="ATP-NAD_kinase_N"/>
</dbReference>
<dbReference type="InterPro" id="IPR005218">
    <property type="entry name" value="Diacylglycerol/lipid_kinase"/>
</dbReference>
<dbReference type="InterPro" id="IPR001206">
    <property type="entry name" value="Diacylglycerol_kinase_cat_dom"/>
</dbReference>
<dbReference type="InterPro" id="IPR022433">
    <property type="entry name" value="Lip_kinase_YegS"/>
</dbReference>
<dbReference type="InterPro" id="IPR050187">
    <property type="entry name" value="Lipid_Phosphate_FormReg"/>
</dbReference>
<dbReference type="InterPro" id="IPR016064">
    <property type="entry name" value="NAD/diacylglycerol_kinase_sf"/>
</dbReference>
<dbReference type="InterPro" id="IPR045540">
    <property type="entry name" value="YegS/DAGK_C"/>
</dbReference>
<dbReference type="NCBIfam" id="TIGR03702">
    <property type="entry name" value="lip_kinase_YegS"/>
    <property type="match status" value="1"/>
</dbReference>
<dbReference type="NCBIfam" id="NF009602">
    <property type="entry name" value="PRK13054.1"/>
    <property type="match status" value="1"/>
</dbReference>
<dbReference type="NCBIfam" id="TIGR00147">
    <property type="entry name" value="YegS/Rv2252/BmrU family lipid kinase"/>
    <property type="match status" value="1"/>
</dbReference>
<dbReference type="PANTHER" id="PTHR12358:SF106">
    <property type="entry name" value="LIPID KINASE YEGS"/>
    <property type="match status" value="1"/>
</dbReference>
<dbReference type="PANTHER" id="PTHR12358">
    <property type="entry name" value="SPHINGOSINE KINASE"/>
    <property type="match status" value="1"/>
</dbReference>
<dbReference type="Pfam" id="PF00781">
    <property type="entry name" value="DAGK_cat"/>
    <property type="match status" value="1"/>
</dbReference>
<dbReference type="Pfam" id="PF19279">
    <property type="entry name" value="YegS_C"/>
    <property type="match status" value="1"/>
</dbReference>
<dbReference type="SMART" id="SM00046">
    <property type="entry name" value="DAGKc"/>
    <property type="match status" value="1"/>
</dbReference>
<dbReference type="SUPFAM" id="SSF111331">
    <property type="entry name" value="NAD kinase/diacylglycerol kinase-like"/>
    <property type="match status" value="1"/>
</dbReference>
<dbReference type="PROSITE" id="PS50146">
    <property type="entry name" value="DAGK"/>
    <property type="match status" value="1"/>
</dbReference>
<keyword id="KW-0067">ATP-binding</keyword>
<keyword id="KW-0963">Cytoplasm</keyword>
<keyword id="KW-0418">Kinase</keyword>
<keyword id="KW-0444">Lipid biosynthesis</keyword>
<keyword id="KW-0443">Lipid metabolism</keyword>
<keyword id="KW-0460">Magnesium</keyword>
<keyword id="KW-0479">Metal-binding</keyword>
<keyword id="KW-0547">Nucleotide-binding</keyword>
<keyword id="KW-0594">Phospholipid biosynthesis</keyword>
<keyword id="KW-1208">Phospholipid metabolism</keyword>
<keyword id="KW-0808">Transferase</keyword>
<reference key="1">
    <citation type="journal article" date="2006" name="PLoS Genet.">
        <title>The complete genome sequence and comparative genome analysis of the high pathogenicity Yersinia enterocolitica strain 8081.</title>
        <authorList>
            <person name="Thomson N.R."/>
            <person name="Howard S."/>
            <person name="Wren B.W."/>
            <person name="Holden M.T.G."/>
            <person name="Crossman L."/>
            <person name="Challis G.L."/>
            <person name="Churcher C."/>
            <person name="Mungall K."/>
            <person name="Brooks K."/>
            <person name="Chillingworth T."/>
            <person name="Feltwell T."/>
            <person name="Abdellah Z."/>
            <person name="Hauser H."/>
            <person name="Jagels K."/>
            <person name="Maddison M."/>
            <person name="Moule S."/>
            <person name="Sanders M."/>
            <person name="Whitehead S."/>
            <person name="Quail M.A."/>
            <person name="Dougan G."/>
            <person name="Parkhill J."/>
            <person name="Prentice M.B."/>
        </authorList>
    </citation>
    <scope>NUCLEOTIDE SEQUENCE [LARGE SCALE GENOMIC DNA]</scope>
    <source>
        <strain>NCTC 13174 / 8081</strain>
    </source>
</reference>
<comment type="function">
    <text evidence="1">Probably phosphorylates lipids; the in vivo substrate is unknown.</text>
</comment>
<comment type="cofactor">
    <cofactor evidence="1">
        <name>Mg(2+)</name>
        <dbReference type="ChEBI" id="CHEBI:18420"/>
    </cofactor>
    <cofactor evidence="1">
        <name>Ca(2+)</name>
        <dbReference type="ChEBI" id="CHEBI:29108"/>
    </cofactor>
    <text evidence="1">Binds 1 Mg(2+) ion per subunit. Ca(2+) may be able to substitute.</text>
</comment>
<comment type="subcellular location">
    <subcellularLocation>
        <location evidence="1">Cytoplasm</location>
    </subcellularLocation>
</comment>
<comment type="similarity">
    <text evidence="1">Belongs to the diacylglycerol/lipid kinase family. YegS lipid kinase subfamily.</text>
</comment>
<accession>A1JKV8</accession>